<keyword id="KW-0002">3D-structure</keyword>
<keyword id="KW-0028">Amino-acid biosynthesis</keyword>
<keyword id="KW-0055">Arginine biosynthesis</keyword>
<keyword id="KW-0963">Cytoplasm</keyword>
<keyword id="KW-1185">Reference proteome</keyword>
<keyword id="KW-0808">Transferase</keyword>
<sequence length="313" mass="33958">MSASLGATRFRPDLLSLDDLDEAQLHALLTLAHQLKRGERVANLHGKVLGLVFLKASTRTRVSFTVAMYQLGGQVIDLSPSNTQVGRGEPVRDTARVLGRYVDGLAIRTFAQTELEEYAHYAGIPVINALTDHEHPCQVVADLLTIRENFGRLAGLKLAYVGDGNNVAHSLLLGCAKVGMSIAVATPEGFTPDPAVSARASEIAGRTGAEVQILRDPFEAARGAHILYTDVWTSMGQEAETQHRLQLFEQYQINAALLNCAAAEAIVLHCLPAHRGEEITDEVMEGPRSRIWDEAENRLHAQKAVLAALMGGR</sequence>
<accession>Q7NGR7</accession>
<proteinExistence type="evidence at protein level"/>
<gene>
    <name evidence="2" type="primary">argF</name>
    <name type="ordered locus">gll3101</name>
</gene>
<reference key="1">
    <citation type="journal article" date="2003" name="DNA Res.">
        <title>Complete genome structure of Gloeobacter violaceus PCC 7421, a cyanobacterium that lacks thylakoids.</title>
        <authorList>
            <person name="Nakamura Y."/>
            <person name="Kaneko T."/>
            <person name="Sato S."/>
            <person name="Mimuro M."/>
            <person name="Miyashita H."/>
            <person name="Tsuchiya T."/>
            <person name="Sasamoto S."/>
            <person name="Watanabe A."/>
            <person name="Kawashima K."/>
            <person name="Kishida Y."/>
            <person name="Kiyokawa C."/>
            <person name="Kohara M."/>
            <person name="Matsumoto M."/>
            <person name="Matsuno A."/>
            <person name="Nakazaki N."/>
            <person name="Shimpo S."/>
            <person name="Takeuchi C."/>
            <person name="Yamada M."/>
            <person name="Tabata S."/>
        </authorList>
    </citation>
    <scope>NUCLEOTIDE SEQUENCE [LARGE SCALE GENOMIC DNA]</scope>
    <source>
        <strain>ATCC 29082 / PCC 7421</strain>
    </source>
</reference>
<reference key="2">
    <citation type="submission" date="2009-02" db="PDB data bank">
        <title>Crystal structure of ornithine carbamoyltransferase from Gloeobacter violaceus.</title>
        <authorList>
            <consortium name="New york sgx research center for structural genomics (NYSGXRC)"/>
            <person name="Fedorov A.A."/>
            <person name="Fedorov E.V."/>
            <person name="Toro R."/>
            <person name="Ramagopal U.A."/>
            <person name="Sauder J.M."/>
            <person name="Burley S.K."/>
            <person name="Almo S.C."/>
        </authorList>
    </citation>
    <scope>X-RAY CRYSTALLOGRAPHY (2.10 ANGSTROMS)</scope>
    <scope>SUBUNIT</scope>
</reference>
<evidence type="ECO:0000250" key="1">
    <source>
        <dbReference type="UniProtKB" id="P04391"/>
    </source>
</evidence>
<evidence type="ECO:0000255" key="2">
    <source>
        <dbReference type="HAMAP-Rule" id="MF_01109"/>
    </source>
</evidence>
<evidence type="ECO:0000305" key="3">
    <source ref="2"/>
</evidence>
<evidence type="ECO:0007829" key="4">
    <source>
        <dbReference type="PDB" id="3GD5"/>
    </source>
</evidence>
<organism>
    <name type="scientific">Gloeobacter violaceus (strain ATCC 29082 / PCC 7421)</name>
    <dbReference type="NCBI Taxonomy" id="251221"/>
    <lineage>
        <taxon>Bacteria</taxon>
        <taxon>Bacillati</taxon>
        <taxon>Cyanobacteriota</taxon>
        <taxon>Cyanophyceae</taxon>
        <taxon>Gloeobacterales</taxon>
        <taxon>Gloeobacteraceae</taxon>
        <taxon>Gloeobacter</taxon>
    </lineage>
</organism>
<comment type="function">
    <text evidence="2">Reversibly catalyzes the transfer of the carbamoyl group from carbamoyl phosphate (CP) to the N(epsilon) atom of ornithine (ORN) to produce L-citrulline.</text>
</comment>
<comment type="catalytic activity">
    <reaction evidence="2">
        <text>carbamoyl phosphate + L-ornithine = L-citrulline + phosphate + H(+)</text>
        <dbReference type="Rhea" id="RHEA:19513"/>
        <dbReference type="ChEBI" id="CHEBI:15378"/>
        <dbReference type="ChEBI" id="CHEBI:43474"/>
        <dbReference type="ChEBI" id="CHEBI:46911"/>
        <dbReference type="ChEBI" id="CHEBI:57743"/>
        <dbReference type="ChEBI" id="CHEBI:58228"/>
        <dbReference type="EC" id="2.1.3.3"/>
    </reaction>
</comment>
<comment type="pathway">
    <text evidence="2">Amino-acid biosynthesis; L-arginine biosynthesis; L-arginine from L-ornithine and carbamoyl phosphate: step 1/3.</text>
</comment>
<comment type="subunit">
    <text evidence="3">Homohexamer.</text>
</comment>
<comment type="subcellular location">
    <subcellularLocation>
        <location evidence="2">Cytoplasm</location>
    </subcellularLocation>
</comment>
<comment type="similarity">
    <text evidence="2">Belongs to the aspartate/ornithine carbamoyltransferase superfamily. OTCase family.</text>
</comment>
<dbReference type="EC" id="2.1.3.3" evidence="2"/>
<dbReference type="EMBL" id="BA000045">
    <property type="protein sequence ID" value="BAC91042.1"/>
    <property type="molecule type" value="Genomic_DNA"/>
</dbReference>
<dbReference type="RefSeq" id="NP_926047.1">
    <property type="nucleotide sequence ID" value="NC_005125.1"/>
</dbReference>
<dbReference type="RefSeq" id="WP_011143094.1">
    <property type="nucleotide sequence ID" value="NC_005125.1"/>
</dbReference>
<dbReference type="PDB" id="3GD5">
    <property type="method" value="X-ray"/>
    <property type="resolution" value="2.10 A"/>
    <property type="chains" value="A/B/C/D/E/F=2-313"/>
</dbReference>
<dbReference type="PDBsum" id="3GD5"/>
<dbReference type="SMR" id="Q7NGR7"/>
<dbReference type="FunCoup" id="Q7NGR7">
    <property type="interactions" value="301"/>
</dbReference>
<dbReference type="STRING" id="251221.gene:10760606"/>
<dbReference type="EnsemblBacteria" id="BAC91042">
    <property type="protein sequence ID" value="BAC91042"/>
    <property type="gene ID" value="BAC91042"/>
</dbReference>
<dbReference type="KEGG" id="gvi:gll3101"/>
<dbReference type="PATRIC" id="fig|251221.4.peg.3130"/>
<dbReference type="eggNOG" id="COG0078">
    <property type="taxonomic scope" value="Bacteria"/>
</dbReference>
<dbReference type="HOGENOM" id="CLU_043846_3_2_3"/>
<dbReference type="InParanoid" id="Q7NGR7"/>
<dbReference type="OrthoDB" id="9802587at2"/>
<dbReference type="PhylomeDB" id="Q7NGR7"/>
<dbReference type="UniPathway" id="UPA00068">
    <property type="reaction ID" value="UER00112"/>
</dbReference>
<dbReference type="EvolutionaryTrace" id="Q7NGR7"/>
<dbReference type="Proteomes" id="UP000000557">
    <property type="component" value="Chromosome"/>
</dbReference>
<dbReference type="GO" id="GO:0005737">
    <property type="term" value="C:cytoplasm"/>
    <property type="evidence" value="ECO:0007669"/>
    <property type="project" value="UniProtKB-SubCell"/>
</dbReference>
<dbReference type="GO" id="GO:0016597">
    <property type="term" value="F:amino acid binding"/>
    <property type="evidence" value="ECO:0007669"/>
    <property type="project" value="InterPro"/>
</dbReference>
<dbReference type="GO" id="GO:0004585">
    <property type="term" value="F:ornithine carbamoyltransferase activity"/>
    <property type="evidence" value="ECO:0000318"/>
    <property type="project" value="GO_Central"/>
</dbReference>
<dbReference type="GO" id="GO:0042450">
    <property type="term" value="P:arginine biosynthetic process via ornithine"/>
    <property type="evidence" value="ECO:0000318"/>
    <property type="project" value="GO_Central"/>
</dbReference>
<dbReference type="GO" id="GO:0019240">
    <property type="term" value="P:citrulline biosynthetic process"/>
    <property type="evidence" value="ECO:0000318"/>
    <property type="project" value="GO_Central"/>
</dbReference>
<dbReference type="GO" id="GO:0006526">
    <property type="term" value="P:L-arginine biosynthetic process"/>
    <property type="evidence" value="ECO:0007669"/>
    <property type="project" value="UniProtKB-UniRule"/>
</dbReference>
<dbReference type="FunFam" id="3.40.50.1370:FF:000008">
    <property type="entry name" value="Ornithine carbamoyltransferase"/>
    <property type="match status" value="1"/>
</dbReference>
<dbReference type="FunFam" id="3.40.50.1370:FF:000016">
    <property type="entry name" value="Ornithine carbamoyltransferase"/>
    <property type="match status" value="1"/>
</dbReference>
<dbReference type="Gene3D" id="3.40.50.1370">
    <property type="entry name" value="Aspartate/ornithine carbamoyltransferase"/>
    <property type="match status" value="2"/>
</dbReference>
<dbReference type="HAMAP" id="MF_01109">
    <property type="entry name" value="OTCase"/>
    <property type="match status" value="1"/>
</dbReference>
<dbReference type="InterPro" id="IPR006132">
    <property type="entry name" value="Asp/Orn_carbamoyltranf_P-bd"/>
</dbReference>
<dbReference type="InterPro" id="IPR006130">
    <property type="entry name" value="Asp/Orn_carbamoylTrfase"/>
</dbReference>
<dbReference type="InterPro" id="IPR036901">
    <property type="entry name" value="Asp/Orn_carbamoylTrfase_sf"/>
</dbReference>
<dbReference type="InterPro" id="IPR006131">
    <property type="entry name" value="Asp_carbamoyltransf_Asp/Orn-bd"/>
</dbReference>
<dbReference type="InterPro" id="IPR002292">
    <property type="entry name" value="Orn/put_carbamltrans"/>
</dbReference>
<dbReference type="InterPro" id="IPR024904">
    <property type="entry name" value="OTCase_ArgI"/>
</dbReference>
<dbReference type="NCBIfam" id="TIGR00658">
    <property type="entry name" value="orni_carb_tr"/>
    <property type="match status" value="1"/>
</dbReference>
<dbReference type="NCBIfam" id="NF001986">
    <property type="entry name" value="PRK00779.1"/>
    <property type="match status" value="1"/>
</dbReference>
<dbReference type="PANTHER" id="PTHR45753">
    <property type="entry name" value="ORNITHINE CARBAMOYLTRANSFERASE, MITOCHONDRIAL"/>
    <property type="match status" value="1"/>
</dbReference>
<dbReference type="PANTHER" id="PTHR45753:SF3">
    <property type="entry name" value="ORNITHINE TRANSCARBAMYLASE, MITOCHONDRIAL"/>
    <property type="match status" value="1"/>
</dbReference>
<dbReference type="Pfam" id="PF00185">
    <property type="entry name" value="OTCace"/>
    <property type="match status" value="1"/>
</dbReference>
<dbReference type="Pfam" id="PF02729">
    <property type="entry name" value="OTCace_N"/>
    <property type="match status" value="1"/>
</dbReference>
<dbReference type="PRINTS" id="PR00100">
    <property type="entry name" value="AOTCASE"/>
</dbReference>
<dbReference type="PRINTS" id="PR00102">
    <property type="entry name" value="OTCASE"/>
</dbReference>
<dbReference type="SUPFAM" id="SSF53671">
    <property type="entry name" value="Aspartate/ornithine carbamoyltransferase"/>
    <property type="match status" value="1"/>
</dbReference>
<dbReference type="PROSITE" id="PS00097">
    <property type="entry name" value="CARBAMOYLTRANSFERASE"/>
    <property type="match status" value="1"/>
</dbReference>
<name>OTC_GLOVI</name>
<feature type="chain" id="PRO_0000112927" description="Ornithine carbamoyltransferase">
    <location>
        <begin position="1"/>
        <end position="313"/>
    </location>
</feature>
<feature type="binding site" evidence="1">
    <location>
        <begin position="57"/>
        <end position="60"/>
    </location>
    <ligand>
        <name>carbamoyl phosphate</name>
        <dbReference type="ChEBI" id="CHEBI:58228"/>
    </ligand>
</feature>
<feature type="binding site" evidence="1">
    <location>
        <position position="84"/>
    </location>
    <ligand>
        <name>carbamoyl phosphate</name>
        <dbReference type="ChEBI" id="CHEBI:58228"/>
    </ligand>
</feature>
<feature type="binding site" evidence="1">
    <location>
        <position position="108"/>
    </location>
    <ligand>
        <name>carbamoyl phosphate</name>
        <dbReference type="ChEBI" id="CHEBI:58228"/>
    </ligand>
</feature>
<feature type="binding site" evidence="1">
    <location>
        <begin position="135"/>
        <end position="138"/>
    </location>
    <ligand>
        <name>carbamoyl phosphate</name>
        <dbReference type="ChEBI" id="CHEBI:58228"/>
    </ligand>
</feature>
<feature type="binding site" evidence="1">
    <location>
        <position position="166"/>
    </location>
    <ligand>
        <name>L-ornithine</name>
        <dbReference type="ChEBI" id="CHEBI:46911"/>
    </ligand>
</feature>
<feature type="binding site" evidence="1">
    <location>
        <position position="230"/>
    </location>
    <ligand>
        <name>L-ornithine</name>
        <dbReference type="ChEBI" id="CHEBI:46911"/>
    </ligand>
</feature>
<feature type="binding site" evidence="1">
    <location>
        <begin position="234"/>
        <end position="235"/>
    </location>
    <ligand>
        <name>L-ornithine</name>
        <dbReference type="ChEBI" id="CHEBI:46911"/>
    </ligand>
</feature>
<feature type="binding site" evidence="1">
    <location>
        <begin position="270"/>
        <end position="271"/>
    </location>
    <ligand>
        <name>carbamoyl phosphate</name>
        <dbReference type="ChEBI" id="CHEBI:58228"/>
    </ligand>
</feature>
<feature type="binding site" evidence="1">
    <location>
        <position position="298"/>
    </location>
    <ligand>
        <name>carbamoyl phosphate</name>
        <dbReference type="ChEBI" id="CHEBI:58228"/>
    </ligand>
</feature>
<feature type="strand" evidence="4">
    <location>
        <begin position="14"/>
        <end position="16"/>
    </location>
</feature>
<feature type="helix" evidence="4">
    <location>
        <begin position="17"/>
        <end position="19"/>
    </location>
</feature>
<feature type="helix" evidence="4">
    <location>
        <begin position="22"/>
        <end position="36"/>
    </location>
</feature>
<feature type="strand" evidence="4">
    <location>
        <begin position="48"/>
        <end position="55"/>
    </location>
</feature>
<feature type="helix" evidence="4">
    <location>
        <begin position="58"/>
        <end position="70"/>
    </location>
</feature>
<feature type="strand" evidence="4">
    <location>
        <begin position="74"/>
        <end position="78"/>
    </location>
</feature>
<feature type="helix" evidence="4">
    <location>
        <begin position="91"/>
        <end position="98"/>
    </location>
</feature>
<feature type="turn" evidence="4">
    <location>
        <begin position="99"/>
        <end position="101"/>
    </location>
</feature>
<feature type="strand" evidence="4">
    <location>
        <begin position="103"/>
        <end position="108"/>
    </location>
</feature>
<feature type="helix" evidence="4">
    <location>
        <begin position="112"/>
        <end position="122"/>
    </location>
</feature>
<feature type="strand" evidence="4">
    <location>
        <begin position="126"/>
        <end position="130"/>
    </location>
</feature>
<feature type="helix" evidence="4">
    <location>
        <begin position="136"/>
        <end position="150"/>
    </location>
</feature>
<feature type="strand" evidence="4">
    <location>
        <begin position="157"/>
        <end position="162"/>
    </location>
</feature>
<feature type="helix" evidence="4">
    <location>
        <begin position="166"/>
        <end position="177"/>
    </location>
</feature>
<feature type="strand" evidence="4">
    <location>
        <begin position="181"/>
        <end position="185"/>
    </location>
</feature>
<feature type="helix" evidence="4">
    <location>
        <begin position="194"/>
        <end position="207"/>
    </location>
</feature>
<feature type="strand" evidence="4">
    <location>
        <begin position="211"/>
        <end position="215"/>
    </location>
</feature>
<feature type="helix" evidence="4">
    <location>
        <begin position="217"/>
        <end position="221"/>
    </location>
</feature>
<feature type="strand" evidence="4">
    <location>
        <begin position="225"/>
        <end position="229"/>
    </location>
</feature>
<feature type="helix" evidence="4">
    <location>
        <begin position="245"/>
        <end position="248"/>
    </location>
</feature>
<feature type="helix" evidence="4">
    <location>
        <begin position="255"/>
        <end position="259"/>
    </location>
</feature>
<feature type="strand" evidence="4">
    <location>
        <begin position="266"/>
        <end position="269"/>
    </location>
</feature>
<feature type="turn" evidence="4">
    <location>
        <begin position="276"/>
        <end position="278"/>
    </location>
</feature>
<feature type="helix" evidence="4">
    <location>
        <begin position="281"/>
        <end position="285"/>
    </location>
</feature>
<feature type="helix" evidence="4">
    <location>
        <begin position="291"/>
        <end position="310"/>
    </location>
</feature>
<protein>
    <recommendedName>
        <fullName evidence="2">Ornithine carbamoyltransferase</fullName>
        <shortName evidence="2">OTCase</shortName>
        <ecNumber evidence="2">2.1.3.3</ecNumber>
    </recommendedName>
</protein>